<proteinExistence type="inferred from homology"/>
<name>SIGK_MYCVP</name>
<sequence length="196" mass="21632">MTASVLVGAAARLPLVTAELDALLRQVAQRDAEAFAAFYDQTRARVYGLITRVLRDPGYSEETTQDVYLQVWRNAAGYDPSVGSALSWLLTLAHRRAVDRVRSEQAASTRESRYGAISVDPPSDHVADDVLLDDERRRVAGCLDSLTDVQRECIQLAYYDGLTYAQVADRLAANLATIKSRMRDGIRALRKCLGVA</sequence>
<feature type="chain" id="PRO_0000313847" description="ECF RNA polymerase sigma factor SigK">
    <location>
        <begin position="1"/>
        <end position="196"/>
    </location>
</feature>
<feature type="DNA-binding region" description="H-T-H motif" evidence="1">
    <location>
        <begin position="164"/>
        <end position="183"/>
    </location>
</feature>
<feature type="region of interest" description="Sigma-70 factor domain-2">
    <location>
        <begin position="39"/>
        <end position="105"/>
    </location>
</feature>
<feature type="region of interest" description="Sigma-70 factor domain-4">
    <location>
        <begin position="142"/>
        <end position="191"/>
    </location>
</feature>
<feature type="short sequence motif" description="Polymerase core binding">
    <location>
        <begin position="62"/>
        <end position="65"/>
    </location>
</feature>
<accession>A1TEV0</accession>
<reference key="1">
    <citation type="submission" date="2006-12" db="EMBL/GenBank/DDBJ databases">
        <title>Complete sequence of Mycobacterium vanbaalenii PYR-1.</title>
        <authorList>
            <consortium name="US DOE Joint Genome Institute"/>
            <person name="Copeland A."/>
            <person name="Lucas S."/>
            <person name="Lapidus A."/>
            <person name="Barry K."/>
            <person name="Detter J.C."/>
            <person name="Glavina del Rio T."/>
            <person name="Hammon N."/>
            <person name="Israni S."/>
            <person name="Dalin E."/>
            <person name="Tice H."/>
            <person name="Pitluck S."/>
            <person name="Singan V."/>
            <person name="Schmutz J."/>
            <person name="Larimer F."/>
            <person name="Land M."/>
            <person name="Hauser L."/>
            <person name="Kyrpides N."/>
            <person name="Anderson I.J."/>
            <person name="Miller C."/>
            <person name="Richardson P."/>
        </authorList>
    </citation>
    <scope>NUCLEOTIDE SEQUENCE [LARGE SCALE GENOMIC DNA]</scope>
    <source>
        <strain>DSM 7251 / JCM 13017 / BCRC 16820 / KCTC 9966 / NRRL B-24157 / PYR-1</strain>
    </source>
</reference>
<organism>
    <name type="scientific">Mycolicibacterium vanbaalenii (strain DSM 7251 / JCM 13017 / BCRC 16820 / KCTC 9966 / NRRL B-24157 / PYR-1)</name>
    <name type="common">Mycobacterium vanbaalenii</name>
    <dbReference type="NCBI Taxonomy" id="350058"/>
    <lineage>
        <taxon>Bacteria</taxon>
        <taxon>Bacillati</taxon>
        <taxon>Actinomycetota</taxon>
        <taxon>Actinomycetes</taxon>
        <taxon>Mycobacteriales</taxon>
        <taxon>Mycobacteriaceae</taxon>
        <taxon>Mycolicibacterium</taxon>
    </lineage>
</organism>
<evidence type="ECO:0000250" key="1"/>
<evidence type="ECO:0000305" key="2"/>
<keyword id="KW-0238">DNA-binding</keyword>
<keyword id="KW-0731">Sigma factor</keyword>
<keyword id="KW-0804">Transcription</keyword>
<keyword id="KW-0805">Transcription regulation</keyword>
<protein>
    <recommendedName>
        <fullName>ECF RNA polymerase sigma factor SigK</fullName>
        <shortName>ECF sigma factor SigK</shortName>
    </recommendedName>
    <alternativeName>
        <fullName>Alternative RNA polymerase sigma factor SigK</fullName>
    </alternativeName>
    <alternativeName>
        <fullName>RNA polymerase sigma-K factor</fullName>
        <shortName>Sigma-K factor</shortName>
    </alternativeName>
</protein>
<gene>
    <name type="primary">sigK</name>
    <name type="ordered locus">Mvan_4927</name>
</gene>
<comment type="function">
    <text evidence="1">Sigma factors are initiation factors that promote the attachment of RNA polymerase to specific initiation sites and are then released. Extracytoplasmic function (ECF) sigma factors are held in an inactive form by an anti-sigma factor until released by regulated intramembrane proteolysis (By similarity).</text>
</comment>
<comment type="subunit">
    <text evidence="1">Interacts transiently with the RNA polymerase catalytic core formed by RpoA, RpoB, RpoC and RpoZ (2 alpha, 1 beta, 1 beta' and 1 omega subunit) to form the RNA polymerase holoenzyme that can initiate transcription. Interacts (via sigma-70 factor domain 4) with anti-sigma-K factor RskA (By similarity).</text>
</comment>
<comment type="domain">
    <text evidence="1">The sigma-70 factor domain-2 mediates sequence-specific interaction with the -10 element in promoter DNA, and plays an important role in melting the double-stranded DNA and the formation of the transcription bubble. The sigma-70 factor domain-2 mediates interaction with the RNA polymerase subunits RpoB and RpoC (By similarity).</text>
</comment>
<comment type="domain">
    <text evidence="1">The sigma-70 factor domain-4 contains a helix-turn-helix (H-T-H) motif that mediates interaction with the -35 element in promoter DNA. The domain also mediates interaction with the RNA polymerase subunit RpoA. Interactions between sigma-70 factor domain-4 and anti-sigma factors prevents interaction of sigma factors with the RNA polymerase catalytic core (By similarity).</text>
</comment>
<comment type="miscellaneous">
    <text evidence="1">Extracytoplasmic function (ECF) sigma factors are held in an inactive form by an anti-sigma factor until released by regulated intramembrane proteolysis (RIP). RIP occurs when an extracytoplasmic signal triggers a concerted proteolytic cascade to transmit information and elicit cellular responses. The membrane-spanning anti-sigma factor is first cut extracytoplasmically (site-1 protease, S1P), then within the membrane itself (site-2 protease, S2P, Rip1), while cytoplasmic proteases finish degrading the regulatory protein, liberating SigK (By similarity).</text>
</comment>
<comment type="similarity">
    <text evidence="2">Belongs to the sigma-70 factor family. ECF subfamily.</text>
</comment>
<dbReference type="EMBL" id="CP000511">
    <property type="protein sequence ID" value="ABM15700.1"/>
    <property type="molecule type" value="Genomic_DNA"/>
</dbReference>
<dbReference type="SMR" id="A1TEV0"/>
<dbReference type="STRING" id="350058.Mvan_4927"/>
<dbReference type="KEGG" id="mva:Mvan_4927"/>
<dbReference type="eggNOG" id="COG1595">
    <property type="taxonomic scope" value="Bacteria"/>
</dbReference>
<dbReference type="HOGENOM" id="CLU_047691_9_3_11"/>
<dbReference type="Proteomes" id="UP000009159">
    <property type="component" value="Chromosome"/>
</dbReference>
<dbReference type="GO" id="GO:0003677">
    <property type="term" value="F:DNA binding"/>
    <property type="evidence" value="ECO:0007669"/>
    <property type="project" value="UniProtKB-KW"/>
</dbReference>
<dbReference type="GO" id="GO:0016987">
    <property type="term" value="F:sigma factor activity"/>
    <property type="evidence" value="ECO:0007669"/>
    <property type="project" value="UniProtKB-KW"/>
</dbReference>
<dbReference type="GO" id="GO:0006352">
    <property type="term" value="P:DNA-templated transcription initiation"/>
    <property type="evidence" value="ECO:0007669"/>
    <property type="project" value="InterPro"/>
</dbReference>
<dbReference type="CDD" id="cd06171">
    <property type="entry name" value="Sigma70_r4"/>
    <property type="match status" value="1"/>
</dbReference>
<dbReference type="Gene3D" id="1.10.1740.10">
    <property type="match status" value="1"/>
</dbReference>
<dbReference type="Gene3D" id="1.10.10.10">
    <property type="entry name" value="Winged helix-like DNA-binding domain superfamily/Winged helix DNA-binding domain"/>
    <property type="match status" value="1"/>
</dbReference>
<dbReference type="InterPro" id="IPR039425">
    <property type="entry name" value="RNA_pol_sigma-70-like"/>
</dbReference>
<dbReference type="InterPro" id="IPR014284">
    <property type="entry name" value="RNA_pol_sigma-70_dom"/>
</dbReference>
<dbReference type="InterPro" id="IPR007627">
    <property type="entry name" value="RNA_pol_sigma70_r2"/>
</dbReference>
<dbReference type="InterPro" id="IPR007630">
    <property type="entry name" value="RNA_pol_sigma70_r4"/>
</dbReference>
<dbReference type="InterPro" id="IPR013325">
    <property type="entry name" value="RNA_pol_sigma_r2"/>
</dbReference>
<dbReference type="InterPro" id="IPR013324">
    <property type="entry name" value="RNA_pol_sigma_r3/r4-like"/>
</dbReference>
<dbReference type="InterPro" id="IPR036388">
    <property type="entry name" value="WH-like_DNA-bd_sf"/>
</dbReference>
<dbReference type="NCBIfam" id="NF007228">
    <property type="entry name" value="PRK09646.1"/>
    <property type="match status" value="1"/>
</dbReference>
<dbReference type="NCBIfam" id="TIGR02937">
    <property type="entry name" value="sigma70-ECF"/>
    <property type="match status" value="1"/>
</dbReference>
<dbReference type="PANTHER" id="PTHR43133:SF66">
    <property type="entry name" value="ECF RNA POLYMERASE SIGMA FACTOR SIGK"/>
    <property type="match status" value="1"/>
</dbReference>
<dbReference type="PANTHER" id="PTHR43133">
    <property type="entry name" value="RNA POLYMERASE ECF-TYPE SIGMA FACTO"/>
    <property type="match status" value="1"/>
</dbReference>
<dbReference type="Pfam" id="PF04542">
    <property type="entry name" value="Sigma70_r2"/>
    <property type="match status" value="1"/>
</dbReference>
<dbReference type="Pfam" id="PF04545">
    <property type="entry name" value="Sigma70_r4"/>
    <property type="match status" value="1"/>
</dbReference>
<dbReference type="SUPFAM" id="SSF88946">
    <property type="entry name" value="Sigma2 domain of RNA polymerase sigma factors"/>
    <property type="match status" value="1"/>
</dbReference>
<dbReference type="SUPFAM" id="SSF88659">
    <property type="entry name" value="Sigma3 and sigma4 domains of RNA polymerase sigma factors"/>
    <property type="match status" value="1"/>
</dbReference>